<dbReference type="EMBL" id="U10397">
    <property type="protein sequence ID" value="AAB68982.1"/>
    <property type="molecule type" value="Genomic_DNA"/>
</dbReference>
<dbReference type="EMBL" id="BK006934">
    <property type="protein sequence ID" value="DAA06839.1"/>
    <property type="molecule type" value="Genomic_DNA"/>
</dbReference>
<dbReference type="PIR" id="S46759">
    <property type="entry name" value="S46759"/>
</dbReference>
<dbReference type="RefSeq" id="NP_012016.1">
    <property type="nucleotide sequence ID" value="NM_001179277.1"/>
</dbReference>
<dbReference type="SMR" id="P38845"/>
<dbReference type="BioGRID" id="36580">
    <property type="interactions" value="164"/>
</dbReference>
<dbReference type="FunCoup" id="P38845">
    <property type="interactions" value="138"/>
</dbReference>
<dbReference type="IntAct" id="P38845">
    <property type="interactions" value="43"/>
</dbReference>
<dbReference type="MINT" id="P38845"/>
<dbReference type="STRING" id="4932.YHR146W"/>
<dbReference type="GlyGen" id="P38845">
    <property type="glycosylation" value="1 site"/>
</dbReference>
<dbReference type="iPTMnet" id="P38845"/>
<dbReference type="PaxDb" id="4932-YHR146W"/>
<dbReference type="PeptideAtlas" id="P38845"/>
<dbReference type="EnsemblFungi" id="YHR146W_mRNA">
    <property type="protein sequence ID" value="YHR146W"/>
    <property type="gene ID" value="YHR146W"/>
</dbReference>
<dbReference type="GeneID" id="856551"/>
<dbReference type="KEGG" id="sce:YHR146W"/>
<dbReference type="AGR" id="SGD:S000001189"/>
<dbReference type="SGD" id="S000001189">
    <property type="gene designation" value="CRP1"/>
</dbReference>
<dbReference type="VEuPathDB" id="FungiDB:YHR146W"/>
<dbReference type="eggNOG" id="KOG1616">
    <property type="taxonomic scope" value="Eukaryota"/>
</dbReference>
<dbReference type="GeneTree" id="ENSGT00940000176749"/>
<dbReference type="HOGENOM" id="CLU_594765_0_0_1"/>
<dbReference type="InParanoid" id="P38845"/>
<dbReference type="OMA" id="TFDNWTK"/>
<dbReference type="OrthoDB" id="5976022at2759"/>
<dbReference type="BioCyc" id="YEAST:G3O-31181-MONOMER"/>
<dbReference type="Reactome" id="R-SCE-1632852">
    <property type="pathway name" value="Macroautophagy"/>
</dbReference>
<dbReference type="Reactome" id="R-SCE-163680">
    <property type="pathway name" value="AMPK inhibits chREBP transcriptional activation activity"/>
</dbReference>
<dbReference type="Reactome" id="R-SCE-200425">
    <property type="pathway name" value="Carnitine shuttle"/>
</dbReference>
<dbReference type="Reactome" id="R-SCE-380972">
    <property type="pathway name" value="Energy dependent regulation of mTOR by LKB1-AMPK"/>
</dbReference>
<dbReference type="BioGRID-ORCS" id="856551">
    <property type="hits" value="4 hits in 10 CRISPR screens"/>
</dbReference>
<dbReference type="PRO" id="PR:P38845"/>
<dbReference type="Proteomes" id="UP000002311">
    <property type="component" value="Chromosome VIII"/>
</dbReference>
<dbReference type="RNAct" id="P38845">
    <property type="molecule type" value="protein"/>
</dbReference>
<dbReference type="GO" id="GO:0071944">
    <property type="term" value="C:cell periphery"/>
    <property type="evidence" value="ECO:0000314"/>
    <property type="project" value="SGD"/>
</dbReference>
<dbReference type="GO" id="GO:0005737">
    <property type="term" value="C:cytoplasm"/>
    <property type="evidence" value="ECO:0000318"/>
    <property type="project" value="GO_Central"/>
</dbReference>
<dbReference type="GO" id="GO:0031588">
    <property type="term" value="C:nucleotide-activated protein kinase complex"/>
    <property type="evidence" value="ECO:0000318"/>
    <property type="project" value="GO_Central"/>
</dbReference>
<dbReference type="GO" id="GO:0005634">
    <property type="term" value="C:nucleus"/>
    <property type="evidence" value="ECO:0000318"/>
    <property type="project" value="GO_Central"/>
</dbReference>
<dbReference type="GO" id="GO:0003677">
    <property type="term" value="F:DNA binding"/>
    <property type="evidence" value="ECO:0000314"/>
    <property type="project" value="SGD"/>
</dbReference>
<dbReference type="GO" id="GO:0019901">
    <property type="term" value="F:protein kinase binding"/>
    <property type="evidence" value="ECO:0000318"/>
    <property type="project" value="GO_Central"/>
</dbReference>
<dbReference type="GO" id="GO:0007165">
    <property type="term" value="P:signal transduction"/>
    <property type="evidence" value="ECO:0000318"/>
    <property type="project" value="GO_Central"/>
</dbReference>
<dbReference type="CDD" id="cd02859">
    <property type="entry name" value="E_set_AMPKbeta_like_N"/>
    <property type="match status" value="1"/>
</dbReference>
<dbReference type="FunFam" id="2.60.40.10:FF:001765">
    <property type="entry name" value="Cruciform DNA-recognizing protein 1"/>
    <property type="match status" value="1"/>
</dbReference>
<dbReference type="Gene3D" id="2.60.40.10">
    <property type="entry name" value="Immunoglobulins"/>
    <property type="match status" value="1"/>
</dbReference>
<dbReference type="InterPro" id="IPR032640">
    <property type="entry name" value="AMPK1_CBM"/>
</dbReference>
<dbReference type="InterPro" id="IPR050827">
    <property type="entry name" value="CRP1_MDG1_kinase"/>
</dbReference>
<dbReference type="InterPro" id="IPR013783">
    <property type="entry name" value="Ig-like_fold"/>
</dbReference>
<dbReference type="InterPro" id="IPR014756">
    <property type="entry name" value="Ig_E-set"/>
</dbReference>
<dbReference type="PANTHER" id="PTHR10343">
    <property type="entry name" value="5'-AMP-ACTIVATED PROTEIN KINASE , BETA SUBUNIT"/>
    <property type="match status" value="1"/>
</dbReference>
<dbReference type="PANTHER" id="PTHR10343:SF81">
    <property type="entry name" value="CRUCIFORM DNA-RECOGNIZING PROTEIN 1-RELATED"/>
    <property type="match status" value="1"/>
</dbReference>
<dbReference type="Pfam" id="PF16561">
    <property type="entry name" value="AMPK1_CBM"/>
    <property type="match status" value="1"/>
</dbReference>
<dbReference type="SUPFAM" id="SSF81296">
    <property type="entry name" value="E set domains"/>
    <property type="match status" value="1"/>
</dbReference>
<keyword id="KW-0238">DNA-binding</keyword>
<keyword id="KW-0597">Phosphoprotein</keyword>
<keyword id="KW-1185">Reference proteome</keyword>
<gene>
    <name type="primary">CRP1</name>
    <name type="ordered locus">YHR146W</name>
</gene>
<feature type="chain" id="PRO_0000202923" description="Cruciform DNA-recognizing protein 1">
    <location>
        <begin position="1"/>
        <end position="465"/>
    </location>
</feature>
<feature type="chain" id="PRO_0000409594" description="CRP1 short N-terminal subpeptide">
    <location>
        <begin position="1"/>
        <end position="160"/>
    </location>
</feature>
<feature type="chain" id="PRO_0000409595" description="CRP1 short C-terminal subpeptide">
    <location>
        <begin position="161"/>
        <end position="465"/>
    </location>
</feature>
<feature type="region of interest" description="Disordered" evidence="1">
    <location>
        <begin position="107"/>
        <end position="227"/>
    </location>
</feature>
<feature type="region of interest" description="X-DNA-binding">
    <location>
        <begin position="160"/>
        <end position="161"/>
    </location>
</feature>
<feature type="region of interest" description="Disordered" evidence="1">
    <location>
        <begin position="247"/>
        <end position="276"/>
    </location>
</feature>
<feature type="region of interest" description="Disordered" evidence="1">
    <location>
        <begin position="300"/>
        <end position="465"/>
    </location>
</feature>
<feature type="compositionally biased region" description="Basic residues" evidence="1">
    <location>
        <begin position="127"/>
        <end position="151"/>
    </location>
</feature>
<feature type="compositionally biased region" description="Acidic residues" evidence="1">
    <location>
        <begin position="156"/>
        <end position="165"/>
    </location>
</feature>
<feature type="compositionally biased region" description="Low complexity" evidence="1">
    <location>
        <begin position="166"/>
        <end position="177"/>
    </location>
</feature>
<feature type="compositionally biased region" description="Basic and acidic residues" evidence="1">
    <location>
        <begin position="337"/>
        <end position="363"/>
    </location>
</feature>
<feature type="compositionally biased region" description="Basic and acidic residues" evidence="1">
    <location>
        <begin position="385"/>
        <end position="398"/>
    </location>
</feature>
<feature type="compositionally biased region" description="Basic and acidic residues" evidence="1">
    <location>
        <begin position="404"/>
        <end position="428"/>
    </location>
</feature>
<feature type="compositionally biased region" description="Basic residues" evidence="1">
    <location>
        <begin position="451"/>
        <end position="465"/>
    </location>
</feature>
<feature type="modified residue" description="Phosphoserine" evidence="5">
    <location>
        <position position="153"/>
    </location>
</feature>
<feature type="modified residue" description="Phosphoserine" evidence="5">
    <location>
        <position position="156"/>
    </location>
</feature>
<feature type="modified residue" description="Phosphothreonine" evidence="7">
    <location>
        <position position="182"/>
    </location>
</feature>
<feature type="modified residue" description="Phosphoserine" evidence="6 7">
    <location>
        <position position="271"/>
    </location>
</feature>
<feature type="modified residue" description="Phosphothreonine" evidence="6 7">
    <location>
        <position position="295"/>
    </location>
</feature>
<feature type="modified residue" description="Phosphoserine" evidence="6">
    <location>
        <position position="319"/>
    </location>
</feature>
<feature type="modified residue" description="Phosphoserine" evidence="7">
    <location>
        <position position="343"/>
    </location>
</feature>
<feature type="modified residue" description="Phosphothreonine" evidence="7">
    <location>
        <position position="366"/>
    </location>
</feature>
<feature type="modified residue" description="Phosphoserine" evidence="6">
    <location>
        <position position="394"/>
    </location>
</feature>
<feature type="modified residue" description="Phosphoserine" evidence="5 6 7">
    <location>
        <position position="440"/>
    </location>
</feature>
<accession>P38845</accession>
<accession>D3DL95</accession>
<sequence>MSSELMFNYTFSWPAGPKDVILTGTFDDWRGTLPLVKTAKGNFEITMPVKLANKDDTFQFKFIVDGVWCVSDSYKKEHVSEGIENNFLQITDLVETQEVAGASRIPEAGGLLCGKPPRSAGPPSTSNRKKNKRNNKKRRSKLKKKSTKNNKKSNESLDDNEEEDGVTGTTTEDVTGTSREETPLAEPTNVSKEAPGNFHILPIDQSADTTQSNGIIGGPGPVLVPNPGEIKEFTEIRDVDARELNERLNKKEEVPEPVAGPIVESSVTEKSPALPQADDPIVETKEVAHNVQELTPQVEAVTPLINEPEPLPTPEAQISIPESSKVEPVEGSLQSKLVEKRESTEGVLDGSKKVENKAKKDEEVFTLDPIVNKAPKLPLTDEQTAEGRKSPAVSEEKEKKKKQEKGSKEVKRSETSKEKKPSAKEVKKQTVKAPKKQTASPLSSSTEEPKKKKTGFFGKLKKLFK</sequence>
<protein>
    <recommendedName>
        <fullName>Cruciform DNA-recognizing protein 1</fullName>
    </recommendedName>
    <component>
        <recommendedName>
            <fullName>CRP1 short N-terminal subpeptide</fullName>
        </recommendedName>
    </component>
    <component>
        <recommendedName>
            <fullName>CRP1 short C-terminal subpeptide</fullName>
        </recommendedName>
    </component>
</protein>
<reference key="1">
    <citation type="journal article" date="1994" name="Science">
        <title>Complete nucleotide sequence of Saccharomyces cerevisiae chromosome VIII.</title>
        <authorList>
            <person name="Johnston M."/>
            <person name="Andrews S."/>
            <person name="Brinkman R."/>
            <person name="Cooper J."/>
            <person name="Ding H."/>
            <person name="Dover J."/>
            <person name="Du Z."/>
            <person name="Favello A."/>
            <person name="Fulton L."/>
            <person name="Gattung S."/>
            <person name="Geisel C."/>
            <person name="Kirsten J."/>
            <person name="Kucaba T."/>
            <person name="Hillier L.W."/>
            <person name="Jier M."/>
            <person name="Johnston L."/>
            <person name="Langston Y."/>
            <person name="Latreille P."/>
            <person name="Louis E.J."/>
            <person name="Macri C."/>
            <person name="Mardis E."/>
            <person name="Menezes S."/>
            <person name="Mouser L."/>
            <person name="Nhan M."/>
            <person name="Rifkin L."/>
            <person name="Riles L."/>
            <person name="St Peter H."/>
            <person name="Trevaskis E."/>
            <person name="Vaughan K."/>
            <person name="Vignati D."/>
            <person name="Wilcox L."/>
            <person name="Wohldman P."/>
            <person name="Waterston R."/>
            <person name="Wilson R."/>
            <person name="Vaudin M."/>
        </authorList>
    </citation>
    <scope>NUCLEOTIDE SEQUENCE [LARGE SCALE GENOMIC DNA]</scope>
    <source>
        <strain>ATCC 204508 / S288c</strain>
    </source>
</reference>
<reference key="2">
    <citation type="journal article" date="2014" name="G3 (Bethesda)">
        <title>The reference genome sequence of Saccharomyces cerevisiae: Then and now.</title>
        <authorList>
            <person name="Engel S.R."/>
            <person name="Dietrich F.S."/>
            <person name="Fisk D.G."/>
            <person name="Binkley G."/>
            <person name="Balakrishnan R."/>
            <person name="Costanzo M.C."/>
            <person name="Dwight S.S."/>
            <person name="Hitz B.C."/>
            <person name="Karra K."/>
            <person name="Nash R.S."/>
            <person name="Weng S."/>
            <person name="Wong E.D."/>
            <person name="Lloyd P."/>
            <person name="Skrzypek M.S."/>
            <person name="Miyasato S.R."/>
            <person name="Simison M."/>
            <person name="Cherry J.M."/>
        </authorList>
    </citation>
    <scope>GENOME REANNOTATION</scope>
    <source>
        <strain>ATCC 204508 / S288c</strain>
    </source>
</reference>
<reference key="3">
    <citation type="journal article" date="2002" name="J. Mol. Biol.">
        <title>Crp1p, a new cruciform DNA-binding protein in the yeast Saccharomyces cerevisiae.</title>
        <authorList>
            <person name="Rass U."/>
            <person name="Kemper B."/>
        </authorList>
    </citation>
    <scope>CRUCIFORM DNA-BINDING</scope>
    <scope>FUNCTION</scope>
    <scope>DOMAIN</scope>
    <scope>PROTEOLYTIC AUTOCLEAVAGE</scope>
</reference>
<reference key="4">
    <citation type="journal article" date="2003" name="Nature">
        <title>Global analysis of protein expression in yeast.</title>
        <authorList>
            <person name="Ghaemmaghami S."/>
            <person name="Huh W.-K."/>
            <person name="Bower K."/>
            <person name="Howson R.W."/>
            <person name="Belle A."/>
            <person name="Dephoure N."/>
            <person name="O'Shea E.K."/>
            <person name="Weissman J.S."/>
        </authorList>
    </citation>
    <scope>LEVEL OF PROTEIN EXPRESSION [LARGE SCALE ANALYSIS]</scope>
</reference>
<reference key="5">
    <citation type="journal article" date="2007" name="J. Proteome Res.">
        <title>Large-scale phosphorylation analysis of alpha-factor-arrested Saccharomyces cerevisiae.</title>
        <authorList>
            <person name="Li X."/>
            <person name="Gerber S.A."/>
            <person name="Rudner A.D."/>
            <person name="Beausoleil S.A."/>
            <person name="Haas W."/>
            <person name="Villen J."/>
            <person name="Elias J.E."/>
            <person name="Gygi S.P."/>
        </authorList>
    </citation>
    <scope>PHOSPHORYLATION [LARGE SCALE ANALYSIS] AT SER-153; SER-156 AND SER-440</scope>
    <scope>IDENTIFICATION BY MASS SPECTROMETRY [LARGE SCALE ANALYSIS]</scope>
    <source>
        <strain>ADR376</strain>
    </source>
</reference>
<reference key="6">
    <citation type="journal article" date="2007" name="Proc. Natl. Acad. Sci. U.S.A.">
        <title>Analysis of phosphorylation sites on proteins from Saccharomyces cerevisiae by electron transfer dissociation (ETD) mass spectrometry.</title>
        <authorList>
            <person name="Chi A."/>
            <person name="Huttenhower C."/>
            <person name="Geer L.Y."/>
            <person name="Coon J.J."/>
            <person name="Syka J.E.P."/>
            <person name="Bai D.L."/>
            <person name="Shabanowitz J."/>
            <person name="Burke D.J."/>
            <person name="Troyanskaya O.G."/>
            <person name="Hunt D.F."/>
        </authorList>
    </citation>
    <scope>IDENTIFICATION BY MASS SPECTROMETRY [LARGE SCALE ANALYSIS]</scope>
</reference>
<reference key="7">
    <citation type="journal article" date="2008" name="Mol. Cell. Proteomics">
        <title>A multidimensional chromatography technology for in-depth phosphoproteome analysis.</title>
        <authorList>
            <person name="Albuquerque C.P."/>
            <person name="Smolka M.B."/>
            <person name="Payne S.H."/>
            <person name="Bafna V."/>
            <person name="Eng J."/>
            <person name="Zhou H."/>
        </authorList>
    </citation>
    <scope>PHOSPHORYLATION [LARGE SCALE ANALYSIS] AT SER-271; THR-295; SER-319; SER-394 AND SER-440</scope>
    <scope>IDENTIFICATION BY MASS SPECTROMETRY [LARGE SCALE ANALYSIS]</scope>
</reference>
<reference key="8">
    <citation type="journal article" date="2009" name="Science">
        <title>Global analysis of Cdk1 substrate phosphorylation sites provides insights into evolution.</title>
        <authorList>
            <person name="Holt L.J."/>
            <person name="Tuch B.B."/>
            <person name="Villen J."/>
            <person name="Johnson A.D."/>
            <person name="Gygi S.P."/>
            <person name="Morgan D.O."/>
        </authorList>
    </citation>
    <scope>PHOSPHORYLATION [LARGE SCALE ANALYSIS] AT THR-182; SER-271; THR-295; SER-343; THR-366 AND SER-440</scope>
    <scope>IDENTIFICATION BY MASS SPECTROMETRY [LARGE SCALE ANALYSIS]</scope>
</reference>
<comment type="function">
    <text evidence="2">Cruciform DNA-binding protein which exerts an enhancing effect on the cleavage of cruciform DNA (X-DNA) by endonuclease VII from bacteriophage T4.</text>
</comment>
<comment type="PTM">
    <text>Cleaved in the vicinity of position 160 to give an X-DNA-binding N-terminal subpeptide and a non-DNA-binding C-terminal subpeptide.</text>
</comment>
<comment type="miscellaneous">
    <text evidence="3">Present with 2990 molecules/cell in log phase SD medium.</text>
</comment>
<comment type="similarity">
    <text evidence="4">Belongs to the CRP1/MDG1 family.</text>
</comment>
<organism>
    <name type="scientific">Saccharomyces cerevisiae (strain ATCC 204508 / S288c)</name>
    <name type="common">Baker's yeast</name>
    <dbReference type="NCBI Taxonomy" id="559292"/>
    <lineage>
        <taxon>Eukaryota</taxon>
        <taxon>Fungi</taxon>
        <taxon>Dikarya</taxon>
        <taxon>Ascomycota</taxon>
        <taxon>Saccharomycotina</taxon>
        <taxon>Saccharomycetes</taxon>
        <taxon>Saccharomycetales</taxon>
        <taxon>Saccharomycetaceae</taxon>
        <taxon>Saccharomyces</taxon>
    </lineage>
</organism>
<proteinExistence type="evidence at protein level"/>
<evidence type="ECO:0000256" key="1">
    <source>
        <dbReference type="SAM" id="MobiDB-lite"/>
    </source>
</evidence>
<evidence type="ECO:0000269" key="2">
    <source>
    </source>
</evidence>
<evidence type="ECO:0000269" key="3">
    <source>
    </source>
</evidence>
<evidence type="ECO:0000305" key="4"/>
<evidence type="ECO:0007744" key="5">
    <source>
    </source>
</evidence>
<evidence type="ECO:0007744" key="6">
    <source>
    </source>
</evidence>
<evidence type="ECO:0007744" key="7">
    <source>
    </source>
</evidence>
<name>CRP1_YEAST</name>